<protein>
    <recommendedName>
        <fullName evidence="1">Dual-specificity RNA methyltransferase RlmN</fullName>
        <ecNumber evidence="1">2.1.1.192</ecNumber>
    </recommendedName>
    <alternativeName>
        <fullName evidence="1">23S rRNA (adenine(2503)-C(2))-methyltransferase</fullName>
    </alternativeName>
    <alternativeName>
        <fullName evidence="1">23S rRNA m2A2503 methyltransferase</fullName>
    </alternativeName>
    <alternativeName>
        <fullName evidence="1">Ribosomal RNA large subunit methyltransferase N</fullName>
    </alternativeName>
    <alternativeName>
        <fullName evidence="1">tRNA (adenine(37)-C(2))-methyltransferase</fullName>
    </alternativeName>
    <alternativeName>
        <fullName evidence="1">tRNA m2A37 methyltransferase</fullName>
    </alternativeName>
</protein>
<comment type="function">
    <text evidence="1">Specifically methylates position 2 of adenine 2503 in 23S rRNA and position 2 of adenine 37 in tRNAs. m2A2503 modification seems to play a crucial role in the proofreading step occurring at the peptidyl transferase center and thus would serve to optimize ribosomal fidelity.</text>
</comment>
<comment type="catalytic activity">
    <reaction evidence="1">
        <text>adenosine(2503) in 23S rRNA + 2 reduced [2Fe-2S]-[ferredoxin] + 2 S-adenosyl-L-methionine = 2-methyladenosine(2503) in 23S rRNA + 5'-deoxyadenosine + L-methionine + 2 oxidized [2Fe-2S]-[ferredoxin] + S-adenosyl-L-homocysteine</text>
        <dbReference type="Rhea" id="RHEA:42916"/>
        <dbReference type="Rhea" id="RHEA-COMP:10000"/>
        <dbReference type="Rhea" id="RHEA-COMP:10001"/>
        <dbReference type="Rhea" id="RHEA-COMP:10152"/>
        <dbReference type="Rhea" id="RHEA-COMP:10282"/>
        <dbReference type="ChEBI" id="CHEBI:17319"/>
        <dbReference type="ChEBI" id="CHEBI:33737"/>
        <dbReference type="ChEBI" id="CHEBI:33738"/>
        <dbReference type="ChEBI" id="CHEBI:57844"/>
        <dbReference type="ChEBI" id="CHEBI:57856"/>
        <dbReference type="ChEBI" id="CHEBI:59789"/>
        <dbReference type="ChEBI" id="CHEBI:74411"/>
        <dbReference type="ChEBI" id="CHEBI:74497"/>
        <dbReference type="EC" id="2.1.1.192"/>
    </reaction>
</comment>
<comment type="catalytic activity">
    <reaction evidence="1">
        <text>adenosine(37) in tRNA + 2 reduced [2Fe-2S]-[ferredoxin] + 2 S-adenosyl-L-methionine = 2-methyladenosine(37) in tRNA + 5'-deoxyadenosine + L-methionine + 2 oxidized [2Fe-2S]-[ferredoxin] + S-adenosyl-L-homocysteine</text>
        <dbReference type="Rhea" id="RHEA:43332"/>
        <dbReference type="Rhea" id="RHEA-COMP:10000"/>
        <dbReference type="Rhea" id="RHEA-COMP:10001"/>
        <dbReference type="Rhea" id="RHEA-COMP:10162"/>
        <dbReference type="Rhea" id="RHEA-COMP:10485"/>
        <dbReference type="ChEBI" id="CHEBI:17319"/>
        <dbReference type="ChEBI" id="CHEBI:33737"/>
        <dbReference type="ChEBI" id="CHEBI:33738"/>
        <dbReference type="ChEBI" id="CHEBI:57844"/>
        <dbReference type="ChEBI" id="CHEBI:57856"/>
        <dbReference type="ChEBI" id="CHEBI:59789"/>
        <dbReference type="ChEBI" id="CHEBI:74411"/>
        <dbReference type="ChEBI" id="CHEBI:74497"/>
        <dbReference type="EC" id="2.1.1.192"/>
    </reaction>
</comment>
<comment type="cofactor">
    <cofactor evidence="1">
        <name>[4Fe-4S] cluster</name>
        <dbReference type="ChEBI" id="CHEBI:49883"/>
    </cofactor>
    <text evidence="1">Binds 1 [4Fe-4S] cluster. The cluster is coordinated with 3 cysteines and an exchangeable S-adenosyl-L-methionine.</text>
</comment>
<comment type="subcellular location">
    <subcellularLocation>
        <location evidence="1">Cytoplasm</location>
    </subcellularLocation>
</comment>
<comment type="miscellaneous">
    <text evidence="1">Reaction proceeds by a ping-pong mechanism involving intermediate methylation of a conserved cysteine residue.</text>
</comment>
<comment type="similarity">
    <text evidence="1">Belongs to the radical SAM superfamily. RlmN family.</text>
</comment>
<evidence type="ECO:0000255" key="1">
    <source>
        <dbReference type="HAMAP-Rule" id="MF_01849"/>
    </source>
</evidence>
<evidence type="ECO:0000255" key="2">
    <source>
        <dbReference type="PROSITE-ProRule" id="PRU01266"/>
    </source>
</evidence>
<reference key="1">
    <citation type="journal article" date="2005" name="Proc. Natl. Acad. Sci. U.S.A.">
        <title>The psychrophilic lifestyle as revealed by the genome sequence of Colwellia psychrerythraea 34H through genomic and proteomic analyses.</title>
        <authorList>
            <person name="Methe B.A."/>
            <person name="Nelson K.E."/>
            <person name="Deming J.W."/>
            <person name="Momen B."/>
            <person name="Melamud E."/>
            <person name="Zhang X."/>
            <person name="Moult J."/>
            <person name="Madupu R."/>
            <person name="Nelson W.C."/>
            <person name="Dodson R.J."/>
            <person name="Brinkac L.M."/>
            <person name="Daugherty S.C."/>
            <person name="Durkin A.S."/>
            <person name="DeBoy R.T."/>
            <person name="Kolonay J.F."/>
            <person name="Sullivan S.A."/>
            <person name="Zhou L."/>
            <person name="Davidsen T.M."/>
            <person name="Wu M."/>
            <person name="Huston A.L."/>
            <person name="Lewis M."/>
            <person name="Weaver B."/>
            <person name="Weidman J.F."/>
            <person name="Khouri H."/>
            <person name="Utterback T.R."/>
            <person name="Feldblyum T.V."/>
            <person name="Fraser C.M."/>
        </authorList>
    </citation>
    <scope>NUCLEOTIDE SEQUENCE [LARGE SCALE GENOMIC DNA]</scope>
    <source>
        <strain>34H / ATCC BAA-681</strain>
    </source>
</reference>
<organism>
    <name type="scientific">Colwellia psychrerythraea (strain 34H / ATCC BAA-681)</name>
    <name type="common">Vibrio psychroerythus</name>
    <dbReference type="NCBI Taxonomy" id="167879"/>
    <lineage>
        <taxon>Bacteria</taxon>
        <taxon>Pseudomonadati</taxon>
        <taxon>Pseudomonadota</taxon>
        <taxon>Gammaproteobacteria</taxon>
        <taxon>Alteromonadales</taxon>
        <taxon>Colwelliaceae</taxon>
        <taxon>Colwellia</taxon>
    </lineage>
</organism>
<accession>Q47WB7</accession>
<dbReference type="EC" id="2.1.1.192" evidence="1"/>
<dbReference type="EMBL" id="CP000083">
    <property type="protein sequence ID" value="AAZ24649.1"/>
    <property type="molecule type" value="Genomic_DNA"/>
</dbReference>
<dbReference type="RefSeq" id="WP_011044986.1">
    <property type="nucleotide sequence ID" value="NC_003910.7"/>
</dbReference>
<dbReference type="SMR" id="Q47WB7"/>
<dbReference type="STRING" id="167879.CPS_4255"/>
<dbReference type="KEGG" id="cps:CPS_4255"/>
<dbReference type="eggNOG" id="COG0820">
    <property type="taxonomic scope" value="Bacteria"/>
</dbReference>
<dbReference type="HOGENOM" id="CLU_029101_0_0_6"/>
<dbReference type="Proteomes" id="UP000000547">
    <property type="component" value="Chromosome"/>
</dbReference>
<dbReference type="GO" id="GO:0005737">
    <property type="term" value="C:cytoplasm"/>
    <property type="evidence" value="ECO:0007669"/>
    <property type="project" value="UniProtKB-SubCell"/>
</dbReference>
<dbReference type="GO" id="GO:0051539">
    <property type="term" value="F:4 iron, 4 sulfur cluster binding"/>
    <property type="evidence" value="ECO:0007669"/>
    <property type="project" value="UniProtKB-UniRule"/>
</dbReference>
<dbReference type="GO" id="GO:0046872">
    <property type="term" value="F:metal ion binding"/>
    <property type="evidence" value="ECO:0007669"/>
    <property type="project" value="UniProtKB-KW"/>
</dbReference>
<dbReference type="GO" id="GO:0070040">
    <property type="term" value="F:rRNA (adenine(2503)-C2-)-methyltransferase activity"/>
    <property type="evidence" value="ECO:0007669"/>
    <property type="project" value="UniProtKB-UniRule"/>
</dbReference>
<dbReference type="GO" id="GO:0019843">
    <property type="term" value="F:rRNA binding"/>
    <property type="evidence" value="ECO:0007669"/>
    <property type="project" value="UniProtKB-UniRule"/>
</dbReference>
<dbReference type="GO" id="GO:0002935">
    <property type="term" value="F:tRNA (adenine(37)-C2)-methyltransferase activity"/>
    <property type="evidence" value="ECO:0007669"/>
    <property type="project" value="UniProtKB-UniRule"/>
</dbReference>
<dbReference type="GO" id="GO:0000049">
    <property type="term" value="F:tRNA binding"/>
    <property type="evidence" value="ECO:0007669"/>
    <property type="project" value="UniProtKB-UniRule"/>
</dbReference>
<dbReference type="GO" id="GO:0070475">
    <property type="term" value="P:rRNA base methylation"/>
    <property type="evidence" value="ECO:0007669"/>
    <property type="project" value="UniProtKB-UniRule"/>
</dbReference>
<dbReference type="GO" id="GO:0030488">
    <property type="term" value="P:tRNA methylation"/>
    <property type="evidence" value="ECO:0007669"/>
    <property type="project" value="UniProtKB-UniRule"/>
</dbReference>
<dbReference type="CDD" id="cd01335">
    <property type="entry name" value="Radical_SAM"/>
    <property type="match status" value="1"/>
</dbReference>
<dbReference type="FunFam" id="1.10.150.530:FF:000003">
    <property type="entry name" value="Dual-specificity RNA methyltransferase RlmN"/>
    <property type="match status" value="1"/>
</dbReference>
<dbReference type="FunFam" id="3.20.20.70:FF:000008">
    <property type="entry name" value="Dual-specificity RNA methyltransferase RlmN"/>
    <property type="match status" value="1"/>
</dbReference>
<dbReference type="Gene3D" id="1.10.150.530">
    <property type="match status" value="1"/>
</dbReference>
<dbReference type="Gene3D" id="3.20.20.70">
    <property type="entry name" value="Aldolase class I"/>
    <property type="match status" value="1"/>
</dbReference>
<dbReference type="HAMAP" id="MF_01849">
    <property type="entry name" value="RNA_methyltr_RlmN"/>
    <property type="match status" value="1"/>
</dbReference>
<dbReference type="InterPro" id="IPR013785">
    <property type="entry name" value="Aldolase_TIM"/>
</dbReference>
<dbReference type="InterPro" id="IPR040072">
    <property type="entry name" value="Methyltransferase_A"/>
</dbReference>
<dbReference type="InterPro" id="IPR048641">
    <property type="entry name" value="RlmN_N"/>
</dbReference>
<dbReference type="InterPro" id="IPR027492">
    <property type="entry name" value="RNA_MTrfase_RlmN"/>
</dbReference>
<dbReference type="InterPro" id="IPR004383">
    <property type="entry name" value="rRNA_lsu_MTrfase_RlmN/Cfr"/>
</dbReference>
<dbReference type="InterPro" id="IPR007197">
    <property type="entry name" value="rSAM"/>
</dbReference>
<dbReference type="NCBIfam" id="NF008396">
    <property type="entry name" value="PRK11194.1"/>
    <property type="match status" value="1"/>
</dbReference>
<dbReference type="NCBIfam" id="TIGR00048">
    <property type="entry name" value="rRNA_mod_RlmN"/>
    <property type="match status" value="1"/>
</dbReference>
<dbReference type="PANTHER" id="PTHR30544">
    <property type="entry name" value="23S RRNA METHYLTRANSFERASE"/>
    <property type="match status" value="1"/>
</dbReference>
<dbReference type="PANTHER" id="PTHR30544:SF5">
    <property type="entry name" value="RADICAL SAM CORE DOMAIN-CONTAINING PROTEIN"/>
    <property type="match status" value="1"/>
</dbReference>
<dbReference type="Pfam" id="PF04055">
    <property type="entry name" value="Radical_SAM"/>
    <property type="match status" value="1"/>
</dbReference>
<dbReference type="Pfam" id="PF21016">
    <property type="entry name" value="RlmN_N"/>
    <property type="match status" value="1"/>
</dbReference>
<dbReference type="PIRSF" id="PIRSF006004">
    <property type="entry name" value="CHP00048"/>
    <property type="match status" value="1"/>
</dbReference>
<dbReference type="SFLD" id="SFLDF00275">
    <property type="entry name" value="adenosine_C2_methyltransferase"/>
    <property type="match status" value="1"/>
</dbReference>
<dbReference type="SFLD" id="SFLDG01062">
    <property type="entry name" value="methyltransferase_(Class_A)"/>
    <property type="match status" value="1"/>
</dbReference>
<dbReference type="SUPFAM" id="SSF102114">
    <property type="entry name" value="Radical SAM enzymes"/>
    <property type="match status" value="1"/>
</dbReference>
<dbReference type="PROSITE" id="PS51918">
    <property type="entry name" value="RADICAL_SAM"/>
    <property type="match status" value="1"/>
</dbReference>
<feature type="chain" id="PRO_0000350133" description="Dual-specificity RNA methyltransferase RlmN">
    <location>
        <begin position="1"/>
        <end position="386"/>
    </location>
</feature>
<feature type="domain" description="Radical SAM core" evidence="2">
    <location>
        <begin position="102"/>
        <end position="340"/>
    </location>
</feature>
<feature type="active site" description="Proton acceptor" evidence="1">
    <location>
        <position position="96"/>
    </location>
</feature>
<feature type="active site" description="S-methylcysteine intermediate" evidence="1">
    <location>
        <position position="345"/>
    </location>
</feature>
<feature type="binding site" evidence="1">
    <location>
        <position position="116"/>
    </location>
    <ligand>
        <name>[4Fe-4S] cluster</name>
        <dbReference type="ChEBI" id="CHEBI:49883"/>
        <note>4Fe-4S-S-AdoMet</note>
    </ligand>
</feature>
<feature type="binding site" evidence="1">
    <location>
        <position position="120"/>
    </location>
    <ligand>
        <name>[4Fe-4S] cluster</name>
        <dbReference type="ChEBI" id="CHEBI:49883"/>
        <note>4Fe-4S-S-AdoMet</note>
    </ligand>
</feature>
<feature type="binding site" evidence="1">
    <location>
        <position position="123"/>
    </location>
    <ligand>
        <name>[4Fe-4S] cluster</name>
        <dbReference type="ChEBI" id="CHEBI:49883"/>
        <note>4Fe-4S-S-AdoMet</note>
    </ligand>
</feature>
<feature type="binding site" evidence="1">
    <location>
        <begin position="170"/>
        <end position="171"/>
    </location>
    <ligand>
        <name>S-adenosyl-L-methionine</name>
        <dbReference type="ChEBI" id="CHEBI:59789"/>
    </ligand>
</feature>
<feature type="binding site" evidence="1">
    <location>
        <position position="202"/>
    </location>
    <ligand>
        <name>S-adenosyl-L-methionine</name>
        <dbReference type="ChEBI" id="CHEBI:59789"/>
    </ligand>
</feature>
<feature type="binding site" evidence="1">
    <location>
        <begin position="224"/>
        <end position="226"/>
    </location>
    <ligand>
        <name>S-adenosyl-L-methionine</name>
        <dbReference type="ChEBI" id="CHEBI:59789"/>
    </ligand>
</feature>
<feature type="binding site" evidence="1">
    <location>
        <position position="302"/>
    </location>
    <ligand>
        <name>S-adenosyl-L-methionine</name>
        <dbReference type="ChEBI" id="CHEBI:59789"/>
    </ligand>
</feature>
<feature type="disulfide bond" description="(transient)" evidence="1">
    <location>
        <begin position="109"/>
        <end position="345"/>
    </location>
</feature>
<name>RLMN_COLP3</name>
<gene>
    <name evidence="1" type="primary">rlmN</name>
    <name type="ordered locus">CPS_4255</name>
</gene>
<keyword id="KW-0004">4Fe-4S</keyword>
<keyword id="KW-0963">Cytoplasm</keyword>
<keyword id="KW-1015">Disulfide bond</keyword>
<keyword id="KW-0408">Iron</keyword>
<keyword id="KW-0411">Iron-sulfur</keyword>
<keyword id="KW-0479">Metal-binding</keyword>
<keyword id="KW-0489">Methyltransferase</keyword>
<keyword id="KW-0698">rRNA processing</keyword>
<keyword id="KW-0949">S-adenosyl-L-methionine</keyword>
<keyword id="KW-0808">Transferase</keyword>
<keyword id="KW-0819">tRNA processing</keyword>
<proteinExistence type="inferred from homology"/>
<sequence>MSDVSGKVNLLNFDHKSMREYLESIGEKPFRADQIMKWIYHFGYSDFEQMTNINKKLREKLQRNCIISAPDISEKQVSEDGTIKYALKLEGGQEVETVWIPENDRATLCVSSQVGCALECTFCATAQQGFNRNLSMAEIIGQVWRVANDIGATRIAGTRPITNIVMMGMGEPLLNMKNLIPALDTMLNDLGYGLSKRRVTVSTSGVVPALDMLKAKIDCALAISIHAPNNKLRDELVPINKKYPLEDFIAAAGRYIEGSKANKQATIEYVMLDHVNDSTDQAHELAHALKGLPSKINLIPFNPYPGSPYSRSSNSRIDRFDKVLQSYGLTVITRRTRGEDIDAACGQLAGDVFDRTKRSVINAAKNAEISSLKNQPKADTISIKVV</sequence>